<feature type="chain" id="PRO_0000317200" description="Transmembrane protein 201">
    <location>
        <begin position="1"/>
        <end position="651"/>
    </location>
</feature>
<feature type="topological domain" description="Nuclear" evidence="2">
    <location>
        <begin position="1"/>
        <end position="209"/>
    </location>
</feature>
<feature type="transmembrane region" description="Helical" evidence="3">
    <location>
        <begin position="210"/>
        <end position="230"/>
    </location>
</feature>
<feature type="topological domain" description="Perinuclear space" evidence="6">
    <location>
        <begin position="231"/>
        <end position="296"/>
    </location>
</feature>
<feature type="transmembrane region" description="Helical" evidence="3">
    <location>
        <begin position="297"/>
        <end position="317"/>
    </location>
</feature>
<feature type="topological domain" description="Nuclear" evidence="6">
    <location>
        <begin position="318"/>
        <end position="321"/>
    </location>
</feature>
<feature type="transmembrane region" description="Helical" evidence="3">
    <location>
        <begin position="322"/>
        <end position="342"/>
    </location>
</feature>
<feature type="topological domain" description="Perinuclear space" evidence="6">
    <location>
        <begin position="343"/>
        <end position="352"/>
    </location>
</feature>
<feature type="transmembrane region" description="Helical" evidence="3">
    <location>
        <begin position="353"/>
        <end position="373"/>
    </location>
</feature>
<feature type="topological domain" description="Nuclear" evidence="2 6">
    <location>
        <begin position="374"/>
        <end position="625"/>
    </location>
</feature>
<feature type="transmembrane region" description="Helical" evidence="3">
    <location>
        <begin position="626"/>
        <end position="646"/>
    </location>
</feature>
<feature type="topological domain" description="Perinuclear space" evidence="6">
    <location>
        <begin position="647"/>
        <end position="651"/>
    </location>
</feature>
<feature type="region of interest" description="Disordered" evidence="4">
    <location>
        <begin position="469"/>
        <end position="525"/>
    </location>
</feature>
<feature type="compositionally biased region" description="Low complexity" evidence="4">
    <location>
        <begin position="502"/>
        <end position="515"/>
    </location>
</feature>
<feature type="glycosylation site" description="N-linked (GlcNAc...) asparagine" evidence="3">
    <location>
        <position position="124"/>
    </location>
</feature>
<feature type="glycosylation site" description="N-linked (GlcNAc...) asparagine" evidence="3">
    <location>
        <position position="259"/>
    </location>
</feature>
<feature type="glycosylation site" description="N-linked (GlcNAc...) asparagine" evidence="3">
    <location>
        <position position="421"/>
    </location>
</feature>
<feature type="glycosylation site" description="N-linked (GlcNAc...) asparagine" evidence="3">
    <location>
        <position position="528"/>
    </location>
</feature>
<gene>
    <name type="primary">tmem201</name>
    <name type="ORF">zgc:162289</name>
</gene>
<accession>A4IG66</accession>
<keyword id="KW-0037">Angiogenesis</keyword>
<keyword id="KW-0325">Glycoprotein</keyword>
<keyword id="KW-0472">Membrane</keyword>
<keyword id="KW-0539">Nucleus</keyword>
<keyword id="KW-1185">Reference proteome</keyword>
<keyword id="KW-0812">Transmembrane</keyword>
<keyword id="KW-1133">Transmembrane helix</keyword>
<reference key="1">
    <citation type="submission" date="2007-03" db="EMBL/GenBank/DDBJ databases">
        <authorList>
            <consortium name="NIH - Zebrafish Gene Collection (ZGC) project"/>
        </authorList>
    </citation>
    <scope>NUCLEOTIDE SEQUENCE [LARGE SCALE MRNA]</scope>
    <source>
        <tissue>Ovary</tissue>
    </source>
</reference>
<reference key="2">
    <citation type="journal article" date="2022" name="J. Mol. Cell Biol.">
        <title>Inner nuclear membrane protein TMEM201 maintains endothelial cell migration and angiogenesis by interacting with the LINC complex.</title>
        <authorList>
            <person name="Zhang Y."/>
            <person name="Kong Y."/>
            <person name="Guo H."/>
            <person name="Liu Y."/>
            <person name="Zang Y."/>
            <person name="Li J."/>
        </authorList>
    </citation>
    <scope>FUNCTION</scope>
    <scope>DISRUPTION PHENOTYPE</scope>
</reference>
<protein>
    <recommendedName>
        <fullName>Transmembrane protein 201</fullName>
    </recommendedName>
</protein>
<organism>
    <name type="scientific">Danio rerio</name>
    <name type="common">Zebrafish</name>
    <name type="synonym">Brachydanio rerio</name>
    <dbReference type="NCBI Taxonomy" id="7955"/>
    <lineage>
        <taxon>Eukaryota</taxon>
        <taxon>Metazoa</taxon>
        <taxon>Chordata</taxon>
        <taxon>Craniata</taxon>
        <taxon>Vertebrata</taxon>
        <taxon>Euteleostomi</taxon>
        <taxon>Actinopterygii</taxon>
        <taxon>Neopterygii</taxon>
        <taxon>Teleostei</taxon>
        <taxon>Ostariophysi</taxon>
        <taxon>Cypriniformes</taxon>
        <taxon>Danionidae</taxon>
        <taxon>Danioninae</taxon>
        <taxon>Danio</taxon>
    </lineage>
</organism>
<sequence>MEALNQILIEYPPLVVGGVGATAVAAGGALIYRIATRKKPTHLQVNCWFCNQDTVVPYGNRNCWDCPYCEQYNGFQENGDYNKPIPAQYMEHLNHGVSAGVPETPKTLQWVNCQMLLCKKCNNNQTLKIKQLASFIPREDENYDEEIEVYKHHLEQTYKLCRPCQTAVEYYIKHQNRQLRALLFNHQLRRTRDADKAFIKNTYSLSTPAWLILLRILTFLACAFLVAVALSGYVDESPSVTQTLSGGVVPPKRVLQNENESKTDEGSLMWDDLMGLLPEKAVENARLFWQSGSDHQMAVASVGLLTCITGVLMAGPVRLRRIDAVASVLWLLVICFYLAECYLKTDVPSWLEMVKFGITSVCCLVGFAAAVATRKSTSQRRARGRRYLSGGSPGEFFCNHGPLLSAPVSESSTFIPTPPPNLSQLLIRQQSQRTRKASPSSLPGRLNRALSLGTIPSLARADSGFLFSGSRPSSQCKDSPPSDYYSLKSGSRPSSPGPSPTPSVAGSVTSTSSSARQRRPLISPARLNISGQKLRLFSSPLEPFSLASPPPFLSEHNPMHSRGFLPDVPHFHLQNHGSVIDEGSVFEHLEKPMGSSSSSSNCHVDTTTGNNIESKPGWKGFLGMTLWPGLLFASLTINLSFICIYVYYNWR</sequence>
<dbReference type="EMBL" id="BC134950">
    <property type="protein sequence ID" value="AAI34951.1"/>
    <property type="molecule type" value="mRNA"/>
</dbReference>
<dbReference type="RefSeq" id="NP_001103936.1">
    <property type="nucleotide sequence ID" value="NM_001110466.1"/>
</dbReference>
<dbReference type="FunCoup" id="A4IG66">
    <property type="interactions" value="1606"/>
</dbReference>
<dbReference type="STRING" id="7955.ENSDARP00000099162"/>
<dbReference type="GlyCosmos" id="A4IG66">
    <property type="glycosylation" value="4 sites, No reported glycans"/>
</dbReference>
<dbReference type="PaxDb" id="7955-ENSDARP00000099162"/>
<dbReference type="PeptideAtlas" id="A4IG66"/>
<dbReference type="GeneID" id="563814"/>
<dbReference type="KEGG" id="dre:563814"/>
<dbReference type="AGR" id="ZFIN:ZDB-GENE-070410-61"/>
<dbReference type="CTD" id="199953"/>
<dbReference type="ZFIN" id="ZDB-GENE-070410-61">
    <property type="gene designation" value="tmem201"/>
</dbReference>
<dbReference type="eggNOG" id="KOG4623">
    <property type="taxonomic scope" value="Eukaryota"/>
</dbReference>
<dbReference type="InParanoid" id="A4IG66"/>
<dbReference type="OrthoDB" id="5966927at2759"/>
<dbReference type="PhylomeDB" id="A4IG66"/>
<dbReference type="PRO" id="PR:A4IG66"/>
<dbReference type="Proteomes" id="UP000000437">
    <property type="component" value="Chromosome 23"/>
</dbReference>
<dbReference type="GO" id="GO:0005637">
    <property type="term" value="C:nuclear inner membrane"/>
    <property type="evidence" value="ECO:0000250"/>
    <property type="project" value="UniProtKB"/>
</dbReference>
<dbReference type="GO" id="GO:0031965">
    <property type="term" value="C:nuclear membrane"/>
    <property type="evidence" value="ECO:0000318"/>
    <property type="project" value="GO_Central"/>
</dbReference>
<dbReference type="GO" id="GO:0051015">
    <property type="term" value="F:actin filament binding"/>
    <property type="evidence" value="ECO:0000318"/>
    <property type="project" value="GO_Central"/>
</dbReference>
<dbReference type="GO" id="GO:0005521">
    <property type="term" value="F:lamin binding"/>
    <property type="evidence" value="ECO:0000318"/>
    <property type="project" value="GO_Central"/>
</dbReference>
<dbReference type="GO" id="GO:0001525">
    <property type="term" value="P:angiogenesis"/>
    <property type="evidence" value="ECO:0000315"/>
    <property type="project" value="UniProtKB"/>
</dbReference>
<dbReference type="GO" id="GO:0030473">
    <property type="term" value="P:nuclear migration along microtubule"/>
    <property type="evidence" value="ECO:0000318"/>
    <property type="project" value="GO_Central"/>
</dbReference>
<dbReference type="GO" id="GO:0010595">
    <property type="term" value="P:positive regulation of endothelial cell migration"/>
    <property type="evidence" value="ECO:0000250"/>
    <property type="project" value="UniProtKB"/>
</dbReference>
<dbReference type="InterPro" id="IPR018617">
    <property type="entry name" value="Ima1_N"/>
</dbReference>
<dbReference type="InterPro" id="IPR040041">
    <property type="entry name" value="TMEM201"/>
</dbReference>
<dbReference type="InterPro" id="IPR018861">
    <property type="entry name" value="TMEM201_C"/>
</dbReference>
<dbReference type="PANTHER" id="PTHR28646">
    <property type="entry name" value="TRANSMEMBRANE PROTEIN 201"/>
    <property type="match status" value="1"/>
</dbReference>
<dbReference type="PANTHER" id="PTHR28646:SF1">
    <property type="entry name" value="TRANSMEMBRANE PROTEIN 201"/>
    <property type="match status" value="1"/>
</dbReference>
<dbReference type="Pfam" id="PF10476">
    <property type="entry name" value="DUF2448"/>
    <property type="match status" value="1"/>
</dbReference>
<dbReference type="Pfam" id="PF09779">
    <property type="entry name" value="Ima1_N"/>
    <property type="match status" value="1"/>
</dbReference>
<proteinExistence type="evidence at transcript level"/>
<name>TM201_DANRE</name>
<comment type="function">
    <text evidence="1 2 5">Critical regulator of angiogenesis and endothelial cell (EC) migration. Promotes the migration of endothelial cells, which is essential for angiogenesis (PubMed:35311970). May be involved in actin-dependent nuclear movement. May be involved in the organization of the nuclear envelope. May recruit Ran GTPase to the nuclear periphery.</text>
</comment>
<comment type="subcellular location">
    <subcellularLocation>
        <location evidence="2">Nucleus inner membrane</location>
        <topology evidence="6">Multi-pass membrane protein</topology>
    </subcellularLocation>
</comment>
<comment type="disruption phenotype">
    <text evidence="5">Knockout leads to defective intersegmental vessel (ISV) development, with a higher percentage of embryos exhibiting impaired vessel formation and incomplete extension of ISVs.</text>
</comment>
<comment type="similarity">
    <text evidence="6">Belongs to the TMEM201 family.</text>
</comment>
<evidence type="ECO:0000250" key="1">
    <source>
        <dbReference type="UniProtKB" id="A2A8U2"/>
    </source>
</evidence>
<evidence type="ECO:0000250" key="2">
    <source>
        <dbReference type="UniProtKB" id="Q5SNT2"/>
    </source>
</evidence>
<evidence type="ECO:0000255" key="3"/>
<evidence type="ECO:0000256" key="4">
    <source>
        <dbReference type="SAM" id="MobiDB-lite"/>
    </source>
</evidence>
<evidence type="ECO:0000269" key="5">
    <source>
    </source>
</evidence>
<evidence type="ECO:0000305" key="6"/>